<name>PIMT_PARL1</name>
<organism>
    <name type="scientific">Parvibaculum lavamentivorans (strain DS-1 / DSM 13023 / NCIMB 13966)</name>
    <dbReference type="NCBI Taxonomy" id="402881"/>
    <lineage>
        <taxon>Bacteria</taxon>
        <taxon>Pseudomonadati</taxon>
        <taxon>Pseudomonadota</taxon>
        <taxon>Alphaproteobacteria</taxon>
        <taxon>Hyphomicrobiales</taxon>
        <taxon>Parvibaculaceae</taxon>
        <taxon>Parvibaculum</taxon>
    </lineage>
</organism>
<feature type="chain" id="PRO_0000351894" description="Protein-L-isoaspartate O-methyltransferase">
    <location>
        <begin position="1"/>
        <end position="222"/>
    </location>
</feature>
<feature type="active site" evidence="1">
    <location>
        <position position="67"/>
    </location>
</feature>
<keyword id="KW-0963">Cytoplasm</keyword>
<keyword id="KW-0489">Methyltransferase</keyword>
<keyword id="KW-1185">Reference proteome</keyword>
<keyword id="KW-0949">S-adenosyl-L-methionine</keyword>
<keyword id="KW-0808">Transferase</keyword>
<accession>A7HXK6</accession>
<evidence type="ECO:0000255" key="1">
    <source>
        <dbReference type="HAMAP-Rule" id="MF_00090"/>
    </source>
</evidence>
<proteinExistence type="inferred from homology"/>
<gene>
    <name evidence="1" type="primary">pcm</name>
    <name type="ordered locus">Plav_3032</name>
</gene>
<comment type="function">
    <text evidence="1">Catalyzes the methyl esterification of L-isoaspartyl residues in peptides and proteins that result from spontaneous decomposition of normal L-aspartyl and L-asparaginyl residues. It plays a role in the repair and/or degradation of damaged proteins.</text>
</comment>
<comment type="catalytic activity">
    <reaction evidence="1">
        <text>[protein]-L-isoaspartate + S-adenosyl-L-methionine = [protein]-L-isoaspartate alpha-methyl ester + S-adenosyl-L-homocysteine</text>
        <dbReference type="Rhea" id="RHEA:12705"/>
        <dbReference type="Rhea" id="RHEA-COMP:12143"/>
        <dbReference type="Rhea" id="RHEA-COMP:12144"/>
        <dbReference type="ChEBI" id="CHEBI:57856"/>
        <dbReference type="ChEBI" id="CHEBI:59789"/>
        <dbReference type="ChEBI" id="CHEBI:90596"/>
        <dbReference type="ChEBI" id="CHEBI:90598"/>
        <dbReference type="EC" id="2.1.1.77"/>
    </reaction>
</comment>
<comment type="subcellular location">
    <subcellularLocation>
        <location evidence="1">Cytoplasm</location>
    </subcellularLocation>
</comment>
<comment type="similarity">
    <text evidence="1">Belongs to the methyltransferase superfamily. L-isoaspartyl/D-aspartyl protein methyltransferase family.</text>
</comment>
<reference key="1">
    <citation type="journal article" date="2011" name="Stand. Genomic Sci.">
        <title>Complete genome sequence of Parvibaculum lavamentivorans type strain (DS-1(T)).</title>
        <authorList>
            <person name="Schleheck D."/>
            <person name="Weiss M."/>
            <person name="Pitluck S."/>
            <person name="Bruce D."/>
            <person name="Land M.L."/>
            <person name="Han S."/>
            <person name="Saunders E."/>
            <person name="Tapia R."/>
            <person name="Detter C."/>
            <person name="Brettin T."/>
            <person name="Han J."/>
            <person name="Woyke T."/>
            <person name="Goodwin L."/>
            <person name="Pennacchio L."/>
            <person name="Nolan M."/>
            <person name="Cook A.M."/>
            <person name="Kjelleberg S."/>
            <person name="Thomas T."/>
        </authorList>
    </citation>
    <scope>NUCLEOTIDE SEQUENCE [LARGE SCALE GENOMIC DNA]</scope>
    <source>
        <strain>DS-1 / DSM 13023 / NCIMB 13966</strain>
    </source>
</reference>
<protein>
    <recommendedName>
        <fullName evidence="1">Protein-L-isoaspartate O-methyltransferase</fullName>
        <ecNumber evidence="1">2.1.1.77</ecNumber>
    </recommendedName>
    <alternativeName>
        <fullName evidence="1">L-isoaspartyl protein carboxyl methyltransferase</fullName>
    </alternativeName>
    <alternativeName>
        <fullName evidence="1">Protein L-isoaspartyl methyltransferase</fullName>
    </alternativeName>
    <alternativeName>
        <fullName evidence="1">Protein-beta-aspartate methyltransferase</fullName>
        <shortName evidence="1">PIMT</shortName>
    </alternativeName>
</protein>
<sequence>MNEETSMDEGEQEKIELIMGLRRQGIRDKRVLSALERVPREKFISATFRKQAYEDHALPIECGQTISQPYIVAYMTEQLHVGERMKVLEVGTGSGYQAAVLSRLCRRVYTIERYRTLLKDAVKRLEDLHIHNVTAKVGDGAQGWPEQAPFDRIIVTAAAPSVPQKLVDQLKEGGLMIVPVAVSGARGEQKLVRIERTGDGVKREELLPVRFVPLVEGVAKES</sequence>
<dbReference type="EC" id="2.1.1.77" evidence="1"/>
<dbReference type="EMBL" id="CP000774">
    <property type="protein sequence ID" value="ABS64639.1"/>
    <property type="molecule type" value="Genomic_DNA"/>
</dbReference>
<dbReference type="RefSeq" id="WP_012111960.1">
    <property type="nucleotide sequence ID" value="NC_009719.1"/>
</dbReference>
<dbReference type="SMR" id="A7HXK6"/>
<dbReference type="STRING" id="402881.Plav_3032"/>
<dbReference type="KEGG" id="pla:Plav_3032"/>
<dbReference type="eggNOG" id="COG2518">
    <property type="taxonomic scope" value="Bacteria"/>
</dbReference>
<dbReference type="HOGENOM" id="CLU_055432_2_0_5"/>
<dbReference type="OrthoDB" id="9810066at2"/>
<dbReference type="Proteomes" id="UP000006377">
    <property type="component" value="Chromosome"/>
</dbReference>
<dbReference type="GO" id="GO:0005737">
    <property type="term" value="C:cytoplasm"/>
    <property type="evidence" value="ECO:0007669"/>
    <property type="project" value="UniProtKB-SubCell"/>
</dbReference>
<dbReference type="GO" id="GO:0004719">
    <property type="term" value="F:protein-L-isoaspartate (D-aspartate) O-methyltransferase activity"/>
    <property type="evidence" value="ECO:0007669"/>
    <property type="project" value="UniProtKB-UniRule"/>
</dbReference>
<dbReference type="GO" id="GO:0032259">
    <property type="term" value="P:methylation"/>
    <property type="evidence" value="ECO:0007669"/>
    <property type="project" value="UniProtKB-KW"/>
</dbReference>
<dbReference type="GO" id="GO:0036211">
    <property type="term" value="P:protein modification process"/>
    <property type="evidence" value="ECO:0007669"/>
    <property type="project" value="UniProtKB-UniRule"/>
</dbReference>
<dbReference type="GO" id="GO:0030091">
    <property type="term" value="P:protein repair"/>
    <property type="evidence" value="ECO:0007669"/>
    <property type="project" value="UniProtKB-UniRule"/>
</dbReference>
<dbReference type="CDD" id="cd02440">
    <property type="entry name" value="AdoMet_MTases"/>
    <property type="match status" value="1"/>
</dbReference>
<dbReference type="FunFam" id="3.40.50.150:FF:000010">
    <property type="entry name" value="Protein-L-isoaspartate O-methyltransferase"/>
    <property type="match status" value="1"/>
</dbReference>
<dbReference type="Gene3D" id="3.40.50.150">
    <property type="entry name" value="Vaccinia Virus protein VP39"/>
    <property type="match status" value="1"/>
</dbReference>
<dbReference type="HAMAP" id="MF_00090">
    <property type="entry name" value="PIMT"/>
    <property type="match status" value="1"/>
</dbReference>
<dbReference type="InterPro" id="IPR000682">
    <property type="entry name" value="PCMT"/>
</dbReference>
<dbReference type="InterPro" id="IPR029063">
    <property type="entry name" value="SAM-dependent_MTases_sf"/>
</dbReference>
<dbReference type="NCBIfam" id="TIGR00080">
    <property type="entry name" value="pimt"/>
    <property type="match status" value="1"/>
</dbReference>
<dbReference type="NCBIfam" id="NF001453">
    <property type="entry name" value="PRK00312.1"/>
    <property type="match status" value="1"/>
</dbReference>
<dbReference type="PANTHER" id="PTHR11579">
    <property type="entry name" value="PROTEIN-L-ISOASPARTATE O-METHYLTRANSFERASE"/>
    <property type="match status" value="1"/>
</dbReference>
<dbReference type="PANTHER" id="PTHR11579:SF0">
    <property type="entry name" value="PROTEIN-L-ISOASPARTATE(D-ASPARTATE) O-METHYLTRANSFERASE"/>
    <property type="match status" value="1"/>
</dbReference>
<dbReference type="Pfam" id="PF01135">
    <property type="entry name" value="PCMT"/>
    <property type="match status" value="1"/>
</dbReference>
<dbReference type="SUPFAM" id="SSF53335">
    <property type="entry name" value="S-adenosyl-L-methionine-dependent methyltransferases"/>
    <property type="match status" value="1"/>
</dbReference>
<dbReference type="PROSITE" id="PS01279">
    <property type="entry name" value="PCMT"/>
    <property type="match status" value="1"/>
</dbReference>